<feature type="chain" id="PRO_0000057337" description="tRNA pseudouridine synthase A">
    <location>
        <begin position="1"/>
        <end position="247"/>
    </location>
</feature>
<feature type="active site" description="Nucleophile" evidence="1">
    <location>
        <position position="52"/>
    </location>
</feature>
<feature type="binding site" evidence="1">
    <location>
        <position position="113"/>
    </location>
    <ligand>
        <name>substrate</name>
    </ligand>
</feature>
<comment type="function">
    <text evidence="1">Formation of pseudouridine at positions 38, 39 and 40 in the anticodon stem and loop of transfer RNAs.</text>
</comment>
<comment type="catalytic activity">
    <reaction evidence="1">
        <text>uridine(38/39/40) in tRNA = pseudouridine(38/39/40) in tRNA</text>
        <dbReference type="Rhea" id="RHEA:22376"/>
        <dbReference type="Rhea" id="RHEA-COMP:10085"/>
        <dbReference type="Rhea" id="RHEA-COMP:10087"/>
        <dbReference type="ChEBI" id="CHEBI:65314"/>
        <dbReference type="ChEBI" id="CHEBI:65315"/>
        <dbReference type="EC" id="5.4.99.12"/>
    </reaction>
</comment>
<comment type="subunit">
    <text evidence="1">Homodimer.</text>
</comment>
<comment type="similarity">
    <text evidence="1">Belongs to the tRNA pseudouridine synthase TruA family.</text>
</comment>
<keyword id="KW-0413">Isomerase</keyword>
<keyword id="KW-0819">tRNA processing</keyword>
<evidence type="ECO:0000255" key="1">
    <source>
        <dbReference type="HAMAP-Rule" id="MF_00171"/>
    </source>
</evidence>
<dbReference type="EC" id="5.4.99.12" evidence="1"/>
<dbReference type="EMBL" id="BX897700">
    <property type="protein sequence ID" value="CAF25574.1"/>
    <property type="molecule type" value="Genomic_DNA"/>
</dbReference>
<dbReference type="RefSeq" id="WP_011178901.1">
    <property type="nucleotide sequence ID" value="NC_005955.1"/>
</dbReference>
<dbReference type="SMR" id="Q6G1G9"/>
<dbReference type="KEGG" id="bqu:BQ00670"/>
<dbReference type="eggNOG" id="COG0101">
    <property type="taxonomic scope" value="Bacteria"/>
</dbReference>
<dbReference type="HOGENOM" id="CLU_014673_3_0_5"/>
<dbReference type="OrthoDB" id="9811823at2"/>
<dbReference type="Proteomes" id="UP000000597">
    <property type="component" value="Chromosome"/>
</dbReference>
<dbReference type="GO" id="GO:0003723">
    <property type="term" value="F:RNA binding"/>
    <property type="evidence" value="ECO:0007669"/>
    <property type="project" value="InterPro"/>
</dbReference>
<dbReference type="GO" id="GO:0160147">
    <property type="term" value="F:tRNA pseudouridine(38-40) synthase activity"/>
    <property type="evidence" value="ECO:0007669"/>
    <property type="project" value="UniProtKB-EC"/>
</dbReference>
<dbReference type="GO" id="GO:0031119">
    <property type="term" value="P:tRNA pseudouridine synthesis"/>
    <property type="evidence" value="ECO:0007669"/>
    <property type="project" value="UniProtKB-UniRule"/>
</dbReference>
<dbReference type="CDD" id="cd02570">
    <property type="entry name" value="PseudoU_synth_EcTruA"/>
    <property type="match status" value="1"/>
</dbReference>
<dbReference type="FunFam" id="3.30.70.580:FF:000001">
    <property type="entry name" value="tRNA pseudouridine synthase A"/>
    <property type="match status" value="1"/>
</dbReference>
<dbReference type="Gene3D" id="3.30.70.660">
    <property type="entry name" value="Pseudouridine synthase I, catalytic domain, C-terminal subdomain"/>
    <property type="match status" value="1"/>
</dbReference>
<dbReference type="Gene3D" id="3.30.70.580">
    <property type="entry name" value="Pseudouridine synthase I, catalytic domain, N-terminal subdomain"/>
    <property type="match status" value="1"/>
</dbReference>
<dbReference type="HAMAP" id="MF_00171">
    <property type="entry name" value="TruA"/>
    <property type="match status" value="1"/>
</dbReference>
<dbReference type="InterPro" id="IPR020103">
    <property type="entry name" value="PsdUridine_synth_cat_dom_sf"/>
</dbReference>
<dbReference type="InterPro" id="IPR001406">
    <property type="entry name" value="PsdUridine_synth_TruA"/>
</dbReference>
<dbReference type="InterPro" id="IPR020097">
    <property type="entry name" value="PsdUridine_synth_TruA_a/b_dom"/>
</dbReference>
<dbReference type="InterPro" id="IPR020095">
    <property type="entry name" value="PsdUridine_synth_TruA_C"/>
</dbReference>
<dbReference type="InterPro" id="IPR020094">
    <property type="entry name" value="TruA/RsuA/RluB/E/F_N"/>
</dbReference>
<dbReference type="NCBIfam" id="TIGR00071">
    <property type="entry name" value="hisT_truA"/>
    <property type="match status" value="1"/>
</dbReference>
<dbReference type="PANTHER" id="PTHR11142">
    <property type="entry name" value="PSEUDOURIDYLATE SYNTHASE"/>
    <property type="match status" value="1"/>
</dbReference>
<dbReference type="PANTHER" id="PTHR11142:SF0">
    <property type="entry name" value="TRNA PSEUDOURIDINE SYNTHASE-LIKE 1"/>
    <property type="match status" value="1"/>
</dbReference>
<dbReference type="Pfam" id="PF01416">
    <property type="entry name" value="PseudoU_synth_1"/>
    <property type="match status" value="2"/>
</dbReference>
<dbReference type="PIRSF" id="PIRSF001430">
    <property type="entry name" value="tRNA_psdUrid_synth"/>
    <property type="match status" value="1"/>
</dbReference>
<dbReference type="SUPFAM" id="SSF55120">
    <property type="entry name" value="Pseudouridine synthase"/>
    <property type="match status" value="1"/>
</dbReference>
<proteinExistence type="inferred from homology"/>
<sequence length="247" mass="28166">MPRFKLTLEYDGSNYAGWQRQAELHTIQSALEQAIFHFSGQQLTTTTAGRTDAGVHATGQVAHVDFIKNWQTYTVRDALNAYLQKQGEEIAVLNVQNVPDNFDARFSAIKRHYLFKILNRLSPPALNIKRVWWIPKPLNVDAMHQAAQKLVGQHDFTTFRSAHCQAKSPIRTLERLDVYREGEEIFLYAQARSFLHHQIRSFAGSLMEVGIGRWTAQDLEAALHAKDRKRCGMVAPPSGLYLTQVDY</sequence>
<name>TRUA_BARQU</name>
<protein>
    <recommendedName>
        <fullName evidence="1">tRNA pseudouridine synthase A</fullName>
        <ecNumber evidence="1">5.4.99.12</ecNumber>
    </recommendedName>
    <alternativeName>
        <fullName evidence="1">tRNA pseudouridine(38-40) synthase</fullName>
    </alternativeName>
    <alternativeName>
        <fullName evidence="1">tRNA pseudouridylate synthase I</fullName>
    </alternativeName>
    <alternativeName>
        <fullName evidence="1">tRNA-uridine isomerase I</fullName>
    </alternativeName>
</protein>
<reference key="1">
    <citation type="journal article" date="2004" name="Proc. Natl. Acad. Sci. U.S.A.">
        <title>The louse-borne human pathogen Bartonella quintana is a genomic derivative of the zoonotic agent Bartonella henselae.</title>
        <authorList>
            <person name="Alsmark U.C.M."/>
            <person name="Frank A.C."/>
            <person name="Karlberg E.O."/>
            <person name="Legault B.-A."/>
            <person name="Ardell D.H."/>
            <person name="Canbaeck B."/>
            <person name="Eriksson A.-S."/>
            <person name="Naeslund A.K."/>
            <person name="Handley S.A."/>
            <person name="Huvet M."/>
            <person name="La Scola B."/>
            <person name="Holmberg M."/>
            <person name="Andersson S.G.E."/>
        </authorList>
    </citation>
    <scope>NUCLEOTIDE SEQUENCE [LARGE SCALE GENOMIC DNA]</scope>
    <source>
        <strain>Toulouse</strain>
    </source>
</reference>
<gene>
    <name evidence="1" type="primary">truA</name>
    <name type="ordered locus">BQ00670</name>
</gene>
<accession>Q6G1G9</accession>
<organism>
    <name type="scientific">Bartonella quintana (strain Toulouse)</name>
    <name type="common">Rochalimaea quintana</name>
    <dbReference type="NCBI Taxonomy" id="283165"/>
    <lineage>
        <taxon>Bacteria</taxon>
        <taxon>Pseudomonadati</taxon>
        <taxon>Pseudomonadota</taxon>
        <taxon>Alphaproteobacteria</taxon>
        <taxon>Hyphomicrobiales</taxon>
        <taxon>Bartonellaceae</taxon>
        <taxon>Bartonella</taxon>
    </lineage>
</organism>